<name>LCL3_COLGM</name>
<proteinExistence type="inferred from homology"/>
<protein>
    <recommendedName>
        <fullName>Probable endonuclease LCL3</fullName>
        <ecNumber>3.1.-.-</ecNumber>
    </recommendedName>
</protein>
<reference key="1">
    <citation type="journal article" date="2012" name="Nat. Genet.">
        <title>Lifestyle transitions in plant pathogenic Colletotrichum fungi deciphered by genome and transcriptome analyses.</title>
        <authorList>
            <person name="O'Connell R.J."/>
            <person name="Thon M.R."/>
            <person name="Hacquard S."/>
            <person name="Amyotte S.G."/>
            <person name="Kleemann J."/>
            <person name="Torres M.F."/>
            <person name="Damm U."/>
            <person name="Buiate E.A."/>
            <person name="Epstein L."/>
            <person name="Alkan N."/>
            <person name="Altmueller J."/>
            <person name="Alvarado-Balderrama L."/>
            <person name="Bauser C.A."/>
            <person name="Becker C."/>
            <person name="Birren B.W."/>
            <person name="Chen Z."/>
            <person name="Choi J."/>
            <person name="Crouch J.A."/>
            <person name="Duvick J.P."/>
            <person name="Farman M.A."/>
            <person name="Gan P."/>
            <person name="Heiman D."/>
            <person name="Henrissat B."/>
            <person name="Howard R.J."/>
            <person name="Kabbage M."/>
            <person name="Koch C."/>
            <person name="Kracher B."/>
            <person name="Kubo Y."/>
            <person name="Law A.D."/>
            <person name="Lebrun M.-H."/>
            <person name="Lee Y.-H."/>
            <person name="Miyara I."/>
            <person name="Moore N."/>
            <person name="Neumann U."/>
            <person name="Nordstroem K."/>
            <person name="Panaccione D.G."/>
            <person name="Panstruga R."/>
            <person name="Place M."/>
            <person name="Proctor R.H."/>
            <person name="Prusky D."/>
            <person name="Rech G."/>
            <person name="Reinhardt R."/>
            <person name="Rollins J.A."/>
            <person name="Rounsley S."/>
            <person name="Schardl C.L."/>
            <person name="Schwartz D.C."/>
            <person name="Shenoy N."/>
            <person name="Shirasu K."/>
            <person name="Sikhakolli U.R."/>
            <person name="Stueber K."/>
            <person name="Sukno S.A."/>
            <person name="Sweigard J.A."/>
            <person name="Takano Y."/>
            <person name="Takahara H."/>
            <person name="Trail F."/>
            <person name="van der Does H.C."/>
            <person name="Voll L.M."/>
            <person name="Will I."/>
            <person name="Young S."/>
            <person name="Zeng Q."/>
            <person name="Zhang J."/>
            <person name="Zhou S."/>
            <person name="Dickman M.B."/>
            <person name="Schulze-Lefert P."/>
            <person name="Ver Loren van Themaat E."/>
            <person name="Ma L.-J."/>
            <person name="Vaillancourt L.J."/>
        </authorList>
    </citation>
    <scope>NUCLEOTIDE SEQUENCE [LARGE SCALE GENOMIC DNA]</scope>
    <source>
        <strain>M1.001 / M2 / FGSC 10212</strain>
    </source>
</reference>
<accession>E3QWM6</accession>
<evidence type="ECO:0000250" key="1"/>
<evidence type="ECO:0000255" key="2"/>
<evidence type="ECO:0000255" key="3">
    <source>
        <dbReference type="PROSITE-ProRule" id="PRU00272"/>
    </source>
</evidence>
<evidence type="ECO:0000256" key="4">
    <source>
        <dbReference type="SAM" id="MobiDB-lite"/>
    </source>
</evidence>
<evidence type="ECO:0000305" key="5"/>
<gene>
    <name type="primary">LCL3</name>
    <name type="ORF">GLRG_10408</name>
</gene>
<keyword id="KW-0106">Calcium</keyword>
<keyword id="KW-0255">Endonuclease</keyword>
<keyword id="KW-0378">Hydrolase</keyword>
<keyword id="KW-0472">Membrane</keyword>
<keyword id="KW-0479">Metal-binding</keyword>
<keyword id="KW-0496">Mitochondrion</keyword>
<keyword id="KW-0540">Nuclease</keyword>
<keyword id="KW-1185">Reference proteome</keyword>
<keyword id="KW-0812">Transmembrane</keyword>
<keyword id="KW-1133">Transmembrane helix</keyword>
<organism>
    <name type="scientific">Colletotrichum graminicola (strain M1.001 / M2 / FGSC 10212)</name>
    <name type="common">Maize anthracnose fungus</name>
    <name type="synonym">Glomerella graminicola</name>
    <dbReference type="NCBI Taxonomy" id="645133"/>
    <lineage>
        <taxon>Eukaryota</taxon>
        <taxon>Fungi</taxon>
        <taxon>Dikarya</taxon>
        <taxon>Ascomycota</taxon>
        <taxon>Pezizomycotina</taxon>
        <taxon>Sordariomycetes</taxon>
        <taxon>Hypocreomycetidae</taxon>
        <taxon>Glomerellales</taxon>
        <taxon>Glomerellaceae</taxon>
        <taxon>Colletotrichum</taxon>
        <taxon>Colletotrichum graminicola species complex</taxon>
    </lineage>
</organism>
<dbReference type="EC" id="3.1.-.-"/>
<dbReference type="EMBL" id="GG697390">
    <property type="protein sequence ID" value="EFQ35264.1"/>
    <property type="molecule type" value="Genomic_DNA"/>
</dbReference>
<dbReference type="RefSeq" id="XP_008099284.1">
    <property type="nucleotide sequence ID" value="XM_008101093.1"/>
</dbReference>
<dbReference type="SMR" id="E3QWM6"/>
<dbReference type="STRING" id="645133.E3QWM6"/>
<dbReference type="EnsemblFungi" id="EFQ35264">
    <property type="protein sequence ID" value="EFQ35264"/>
    <property type="gene ID" value="GLRG_10408"/>
</dbReference>
<dbReference type="GeneID" id="24415773"/>
<dbReference type="VEuPathDB" id="FungiDB:GLRG_10408"/>
<dbReference type="eggNOG" id="ENOG502S1U4">
    <property type="taxonomic scope" value="Eukaryota"/>
</dbReference>
<dbReference type="HOGENOM" id="CLU_046484_0_1_1"/>
<dbReference type="OrthoDB" id="430293at2759"/>
<dbReference type="Proteomes" id="UP000008782">
    <property type="component" value="Unassembled WGS sequence"/>
</dbReference>
<dbReference type="GO" id="GO:0016020">
    <property type="term" value="C:membrane"/>
    <property type="evidence" value="ECO:0007669"/>
    <property type="project" value="UniProtKB-SubCell"/>
</dbReference>
<dbReference type="GO" id="GO:0005739">
    <property type="term" value="C:mitochondrion"/>
    <property type="evidence" value="ECO:0007669"/>
    <property type="project" value="UniProtKB-SubCell"/>
</dbReference>
<dbReference type="GO" id="GO:0004519">
    <property type="term" value="F:endonuclease activity"/>
    <property type="evidence" value="ECO:0007669"/>
    <property type="project" value="UniProtKB-KW"/>
</dbReference>
<dbReference type="GO" id="GO:0046872">
    <property type="term" value="F:metal ion binding"/>
    <property type="evidence" value="ECO:0007669"/>
    <property type="project" value="UniProtKB-KW"/>
</dbReference>
<dbReference type="FunFam" id="2.40.50.90:FF:000029">
    <property type="entry name" value="Probable endonuclease lcl3"/>
    <property type="match status" value="1"/>
</dbReference>
<dbReference type="Gene3D" id="2.40.50.90">
    <property type="match status" value="1"/>
</dbReference>
<dbReference type="InterPro" id="IPR035437">
    <property type="entry name" value="SNase_OB-fold_sf"/>
</dbReference>
<dbReference type="InterPro" id="IPR016071">
    <property type="entry name" value="Staphylococal_nuclease_OB-fold"/>
</dbReference>
<dbReference type="PANTHER" id="PTHR12302">
    <property type="entry name" value="EBNA2 BINDING PROTEIN P100"/>
    <property type="match status" value="1"/>
</dbReference>
<dbReference type="PANTHER" id="PTHR12302:SF3">
    <property type="entry name" value="SERINE_THREONINE-PROTEIN KINASE 31"/>
    <property type="match status" value="1"/>
</dbReference>
<dbReference type="Pfam" id="PF00565">
    <property type="entry name" value="SNase"/>
    <property type="match status" value="1"/>
</dbReference>
<dbReference type="SMART" id="SM00318">
    <property type="entry name" value="SNc"/>
    <property type="match status" value="1"/>
</dbReference>
<dbReference type="SUPFAM" id="SSF50199">
    <property type="entry name" value="Staphylococcal nuclease"/>
    <property type="match status" value="1"/>
</dbReference>
<dbReference type="PROSITE" id="PS50830">
    <property type="entry name" value="TNASE_3"/>
    <property type="match status" value="1"/>
</dbReference>
<feature type="chain" id="PRO_0000408657" description="Probable endonuclease LCL3">
    <location>
        <begin position="1"/>
        <end position="273"/>
    </location>
</feature>
<feature type="transmembrane region" description="Helical" evidence="2">
    <location>
        <begin position="47"/>
        <end position="64"/>
    </location>
</feature>
<feature type="domain" description="TNase-like" evidence="3">
    <location>
        <begin position="85"/>
        <end position="243"/>
    </location>
</feature>
<feature type="region of interest" description="Disordered" evidence="4">
    <location>
        <begin position="1"/>
        <end position="36"/>
    </location>
</feature>
<feature type="region of interest" description="Disordered" evidence="4">
    <location>
        <begin position="252"/>
        <end position="273"/>
    </location>
</feature>
<feature type="compositionally biased region" description="Low complexity" evidence="4">
    <location>
        <begin position="1"/>
        <end position="16"/>
    </location>
</feature>
<feature type="compositionally biased region" description="Basic and acidic residues" evidence="4">
    <location>
        <begin position="257"/>
        <end position="267"/>
    </location>
</feature>
<feature type="active site" evidence="3">
    <location>
        <position position="134"/>
    </location>
</feature>
<feature type="active site" evidence="3">
    <location>
        <position position="142"/>
    </location>
</feature>
<feature type="active site" evidence="3">
    <location>
        <position position="182"/>
    </location>
</feature>
<feature type="binding site" evidence="3">
    <location>
        <position position="139"/>
    </location>
    <ligand>
        <name>Ca(2+)</name>
        <dbReference type="ChEBI" id="CHEBI:29108"/>
    </ligand>
</feature>
<sequence>MPWPFSSSSSAGSPTHSQKEDGARSKPTSWNDLLPKPDPPLHAAKEWAPVFLTSVASLAAFIFYQSRLRRFPTAGHIQPDLFRKRTLLGRVTSVGDGDNFHMFHTPGGRLAGWDWLRKVPTTKTALKGKTIPVRMAGIDAPEGAHFGRPGQPGAAEALQWLRSYILDKRIWVRIHRRDQYDRVVATVYVRRFLFKKDVGLEMLKLGLATTYEAKSGVEWGGAEEAYKAAEAKAQSKRLGIWNGEASTFESPRAYKTRTNETEGKKSEWFSGWS</sequence>
<comment type="subcellular location">
    <subcellularLocation>
        <location>Mitochondrion</location>
    </subcellularLocation>
    <subcellularLocation>
        <location evidence="1">Membrane</location>
        <topology evidence="1">Single-pass membrane protein</topology>
    </subcellularLocation>
</comment>
<comment type="similarity">
    <text evidence="5">Belongs to the LCL3 family.</text>
</comment>